<reference key="1">
    <citation type="submission" date="2006-12" db="EMBL/GenBank/DDBJ databases">
        <title>Complete sequence of Shewanella amazonensis SB2B.</title>
        <authorList>
            <consortium name="US DOE Joint Genome Institute"/>
            <person name="Copeland A."/>
            <person name="Lucas S."/>
            <person name="Lapidus A."/>
            <person name="Barry K."/>
            <person name="Detter J.C."/>
            <person name="Glavina del Rio T."/>
            <person name="Hammon N."/>
            <person name="Israni S."/>
            <person name="Dalin E."/>
            <person name="Tice H."/>
            <person name="Pitluck S."/>
            <person name="Munk A.C."/>
            <person name="Brettin T."/>
            <person name="Bruce D."/>
            <person name="Han C."/>
            <person name="Tapia R."/>
            <person name="Gilna P."/>
            <person name="Schmutz J."/>
            <person name="Larimer F."/>
            <person name="Land M."/>
            <person name="Hauser L."/>
            <person name="Kyrpides N."/>
            <person name="Mikhailova N."/>
            <person name="Fredrickson J."/>
            <person name="Richardson P."/>
        </authorList>
    </citation>
    <scope>NUCLEOTIDE SEQUENCE [LARGE SCALE GENOMIC DNA]</scope>
    <source>
        <strain>ATCC BAA-1098 / SB2B</strain>
    </source>
</reference>
<proteinExistence type="inferred from homology"/>
<protein>
    <recommendedName>
        <fullName evidence="1">Pantothenate kinase</fullName>
        <ecNumber evidence="1">2.7.1.33</ecNumber>
    </recommendedName>
    <alternativeName>
        <fullName evidence="1">Pantothenic acid kinase</fullName>
    </alternativeName>
</protein>
<name>COAA_SHEAM</name>
<sequence length="315" mass="36091">MINNQTQEALYLDFDRARWAELRNSVPLTLSEADLTRLRGINERISLSEVTDIYLPLSRLLNLIVGARQQRGLVLNQFLGNKQPDSPYVISIAGSVAVGKSTTARILQALLKQWPEHPKVDLVTTDGFLYPLTELKRKGLLQRKGFPESYDTKMLIDFVSAVKSGAERVEVPLYSHIIYDRLPYERQVIQKPDILILEGLNVLQTGLDSPVDIRRPFVSDFVDFSIYVDADESLLKSWYIERFLQFRSSAFADENSYFRHYASLNDTQATETASQIWDGINGPNLRMNIQPTRERAHLILRKGADHLMNRVLLRK</sequence>
<gene>
    <name evidence="1" type="primary">coaA</name>
    <name type="ordered locus">Sama_0198</name>
</gene>
<organism>
    <name type="scientific">Shewanella amazonensis (strain ATCC BAA-1098 / SB2B)</name>
    <dbReference type="NCBI Taxonomy" id="326297"/>
    <lineage>
        <taxon>Bacteria</taxon>
        <taxon>Pseudomonadati</taxon>
        <taxon>Pseudomonadota</taxon>
        <taxon>Gammaproteobacteria</taxon>
        <taxon>Alteromonadales</taxon>
        <taxon>Shewanellaceae</taxon>
        <taxon>Shewanella</taxon>
    </lineage>
</organism>
<feature type="chain" id="PRO_0000325563" description="Pantothenate kinase">
    <location>
        <begin position="1"/>
        <end position="315"/>
    </location>
</feature>
<feature type="binding site" evidence="1">
    <location>
        <begin position="94"/>
        <end position="101"/>
    </location>
    <ligand>
        <name>ATP</name>
        <dbReference type="ChEBI" id="CHEBI:30616"/>
    </ligand>
</feature>
<accession>A1S203</accession>
<comment type="catalytic activity">
    <reaction evidence="1">
        <text>(R)-pantothenate + ATP = (R)-4'-phosphopantothenate + ADP + H(+)</text>
        <dbReference type="Rhea" id="RHEA:16373"/>
        <dbReference type="ChEBI" id="CHEBI:10986"/>
        <dbReference type="ChEBI" id="CHEBI:15378"/>
        <dbReference type="ChEBI" id="CHEBI:29032"/>
        <dbReference type="ChEBI" id="CHEBI:30616"/>
        <dbReference type="ChEBI" id="CHEBI:456216"/>
        <dbReference type="EC" id="2.7.1.33"/>
    </reaction>
</comment>
<comment type="pathway">
    <text evidence="1">Cofactor biosynthesis; coenzyme A biosynthesis; CoA from (R)-pantothenate: step 1/5.</text>
</comment>
<comment type="subcellular location">
    <subcellularLocation>
        <location evidence="1">Cytoplasm</location>
    </subcellularLocation>
</comment>
<comment type="similarity">
    <text evidence="1">Belongs to the prokaryotic pantothenate kinase family.</text>
</comment>
<dbReference type="EC" id="2.7.1.33" evidence="1"/>
<dbReference type="EMBL" id="CP000507">
    <property type="protein sequence ID" value="ABL98409.1"/>
    <property type="molecule type" value="Genomic_DNA"/>
</dbReference>
<dbReference type="RefSeq" id="WP_011758320.1">
    <property type="nucleotide sequence ID" value="NC_008700.1"/>
</dbReference>
<dbReference type="SMR" id="A1S203"/>
<dbReference type="STRING" id="326297.Sama_0198"/>
<dbReference type="KEGG" id="saz:Sama_0198"/>
<dbReference type="eggNOG" id="COG1072">
    <property type="taxonomic scope" value="Bacteria"/>
</dbReference>
<dbReference type="HOGENOM" id="CLU_053818_1_1_6"/>
<dbReference type="OrthoDB" id="1550976at2"/>
<dbReference type="UniPathway" id="UPA00241">
    <property type="reaction ID" value="UER00352"/>
</dbReference>
<dbReference type="Proteomes" id="UP000009175">
    <property type="component" value="Chromosome"/>
</dbReference>
<dbReference type="GO" id="GO:0005737">
    <property type="term" value="C:cytoplasm"/>
    <property type="evidence" value="ECO:0007669"/>
    <property type="project" value="UniProtKB-SubCell"/>
</dbReference>
<dbReference type="GO" id="GO:0005524">
    <property type="term" value="F:ATP binding"/>
    <property type="evidence" value="ECO:0007669"/>
    <property type="project" value="UniProtKB-UniRule"/>
</dbReference>
<dbReference type="GO" id="GO:0004594">
    <property type="term" value="F:pantothenate kinase activity"/>
    <property type="evidence" value="ECO:0007669"/>
    <property type="project" value="UniProtKB-UniRule"/>
</dbReference>
<dbReference type="GO" id="GO:0015937">
    <property type="term" value="P:coenzyme A biosynthetic process"/>
    <property type="evidence" value="ECO:0007669"/>
    <property type="project" value="UniProtKB-UniRule"/>
</dbReference>
<dbReference type="CDD" id="cd02025">
    <property type="entry name" value="PanK"/>
    <property type="match status" value="1"/>
</dbReference>
<dbReference type="FunFam" id="3.40.50.300:FF:000242">
    <property type="entry name" value="Pantothenate kinase"/>
    <property type="match status" value="1"/>
</dbReference>
<dbReference type="Gene3D" id="3.40.50.300">
    <property type="entry name" value="P-loop containing nucleotide triphosphate hydrolases"/>
    <property type="match status" value="1"/>
</dbReference>
<dbReference type="HAMAP" id="MF_00215">
    <property type="entry name" value="Pantothen_kinase_1"/>
    <property type="match status" value="1"/>
</dbReference>
<dbReference type="InterPro" id="IPR027417">
    <property type="entry name" value="P-loop_NTPase"/>
</dbReference>
<dbReference type="InterPro" id="IPR004566">
    <property type="entry name" value="PanK"/>
</dbReference>
<dbReference type="InterPro" id="IPR006083">
    <property type="entry name" value="PRK/URK"/>
</dbReference>
<dbReference type="NCBIfam" id="TIGR00554">
    <property type="entry name" value="panK_bact"/>
    <property type="match status" value="1"/>
</dbReference>
<dbReference type="PANTHER" id="PTHR10285">
    <property type="entry name" value="URIDINE KINASE"/>
    <property type="match status" value="1"/>
</dbReference>
<dbReference type="Pfam" id="PF00485">
    <property type="entry name" value="PRK"/>
    <property type="match status" value="1"/>
</dbReference>
<dbReference type="PIRSF" id="PIRSF000545">
    <property type="entry name" value="Pantothenate_kin"/>
    <property type="match status" value="1"/>
</dbReference>
<dbReference type="SUPFAM" id="SSF52540">
    <property type="entry name" value="P-loop containing nucleoside triphosphate hydrolases"/>
    <property type="match status" value="1"/>
</dbReference>
<evidence type="ECO:0000255" key="1">
    <source>
        <dbReference type="HAMAP-Rule" id="MF_00215"/>
    </source>
</evidence>
<keyword id="KW-0067">ATP-binding</keyword>
<keyword id="KW-0173">Coenzyme A biosynthesis</keyword>
<keyword id="KW-0963">Cytoplasm</keyword>
<keyword id="KW-0418">Kinase</keyword>
<keyword id="KW-0547">Nucleotide-binding</keyword>
<keyword id="KW-1185">Reference proteome</keyword>
<keyword id="KW-0808">Transferase</keyword>